<evidence type="ECO:0000250" key="1">
    <source>
        <dbReference type="UniProtKB" id="O60826"/>
    </source>
</evidence>
<evidence type="ECO:0000250" key="2">
    <source>
        <dbReference type="UniProtKB" id="Q9JIG7"/>
    </source>
</evidence>
<evidence type="ECO:0000255" key="3"/>
<evidence type="ECO:0000256" key="4">
    <source>
        <dbReference type="SAM" id="MobiDB-lite"/>
    </source>
</evidence>
<evidence type="ECO:0000305" key="5"/>
<accession>Q1RMI8</accession>
<name>CCD22_BOVIN</name>
<dbReference type="EMBL" id="BC114868">
    <property type="protein sequence ID" value="AAI14869.1"/>
    <property type="molecule type" value="mRNA"/>
</dbReference>
<dbReference type="RefSeq" id="NP_001069484.1">
    <property type="nucleotide sequence ID" value="NM_001076016.2"/>
</dbReference>
<dbReference type="SMR" id="Q1RMI8"/>
<dbReference type="FunCoup" id="Q1RMI8">
    <property type="interactions" value="3306"/>
</dbReference>
<dbReference type="STRING" id="9913.ENSBTAP00000066233"/>
<dbReference type="iPTMnet" id="Q1RMI8"/>
<dbReference type="PaxDb" id="9913-ENSBTAP00000042324"/>
<dbReference type="Ensembl" id="ENSBTAT00000044871.3">
    <property type="protein sequence ID" value="ENSBTAP00000042324.1"/>
    <property type="gene ID" value="ENSBTAG00000013277.6"/>
</dbReference>
<dbReference type="GeneID" id="534246"/>
<dbReference type="KEGG" id="bta:534246"/>
<dbReference type="CTD" id="28952"/>
<dbReference type="VEuPathDB" id="HostDB:ENSBTAG00000013277"/>
<dbReference type="VGNC" id="VGNC:26886">
    <property type="gene designation" value="CCDC22"/>
</dbReference>
<dbReference type="eggNOG" id="KOG1937">
    <property type="taxonomic scope" value="Eukaryota"/>
</dbReference>
<dbReference type="GeneTree" id="ENSGT00390000003809"/>
<dbReference type="HOGENOM" id="CLU_024231_1_0_1"/>
<dbReference type="InParanoid" id="Q1RMI8"/>
<dbReference type="OrthoDB" id="10266736at2759"/>
<dbReference type="TreeFam" id="TF325575"/>
<dbReference type="Reactome" id="R-BTA-8951664">
    <property type="pathway name" value="Neddylation"/>
</dbReference>
<dbReference type="Proteomes" id="UP000009136">
    <property type="component" value="Chromosome X"/>
</dbReference>
<dbReference type="Bgee" id="ENSBTAG00000013277">
    <property type="expression patterns" value="Expressed in choroid plexus and 105 other cell types or tissues"/>
</dbReference>
<dbReference type="GO" id="GO:0005813">
    <property type="term" value="C:centrosome"/>
    <property type="evidence" value="ECO:0000250"/>
    <property type="project" value="UniProtKB"/>
</dbReference>
<dbReference type="GO" id="GO:0005768">
    <property type="term" value="C:endosome"/>
    <property type="evidence" value="ECO:0007669"/>
    <property type="project" value="UniProtKB-SubCell"/>
</dbReference>
<dbReference type="GO" id="GO:0097602">
    <property type="term" value="F:cullin family protein binding"/>
    <property type="evidence" value="ECO:0000318"/>
    <property type="project" value="GO_Central"/>
</dbReference>
<dbReference type="GO" id="GO:0032456">
    <property type="term" value="P:endocytic recycling"/>
    <property type="evidence" value="ECO:0000250"/>
    <property type="project" value="UniProtKB"/>
</dbReference>
<dbReference type="GO" id="GO:2000060">
    <property type="term" value="P:positive regulation of ubiquitin-dependent protein catabolic process"/>
    <property type="evidence" value="ECO:0000318"/>
    <property type="project" value="GO_Central"/>
</dbReference>
<dbReference type="GO" id="GO:0015031">
    <property type="term" value="P:protein transport"/>
    <property type="evidence" value="ECO:0007669"/>
    <property type="project" value="UniProtKB-KW"/>
</dbReference>
<dbReference type="InterPro" id="IPR008530">
    <property type="entry name" value="CCDC22"/>
</dbReference>
<dbReference type="InterPro" id="IPR048348">
    <property type="entry name" value="CCDC22_CC"/>
</dbReference>
<dbReference type="InterPro" id="IPR048349">
    <property type="entry name" value="CCDC22_N"/>
</dbReference>
<dbReference type="PANTHER" id="PTHR15668:SF4">
    <property type="entry name" value="COILED-COIL DOMAIN-CONTAINING PROTEIN 22"/>
    <property type="match status" value="1"/>
</dbReference>
<dbReference type="PANTHER" id="PTHR15668">
    <property type="entry name" value="JM1 PROTEIN"/>
    <property type="match status" value="1"/>
</dbReference>
<dbReference type="Pfam" id="PF05667">
    <property type="entry name" value="CCDC22_CC"/>
    <property type="match status" value="2"/>
</dbReference>
<dbReference type="Pfam" id="PF21674">
    <property type="entry name" value="CCDC22_N"/>
    <property type="match status" value="1"/>
</dbReference>
<comment type="function">
    <text evidence="1">Component of the commander complex that is essential for endosomal recycling of transmembrane cargos; the Commander complex is composed of composed of the CCC subcomplex and the retriever subcomplex (By similarity). Component of the CCC complex, which is involved in the regulation of endosomal recycling of surface proteins, including integrins, signaling receptor and channels (By similarity). Involved in regulation of NF-kappa-B signaling (By similarity). Promotes ubiquitination of I-kappa-B-kinase subunit IKBKB and its subsequent proteasomal degradation leading to NF-kappa-B activation; the function may involve association with COMMD8 and a CUL1-dependent E3 ubiquitin ligase complex (By similarity). May down-regulate NF-kappa-B activity via association with COMMD1 and involving a CUL2-dependent E3 ubiquitin ligase complex. Regulates the cellular localization of COMM domain-containing proteins, such as COMMD1 and COMMD10 (By similarity). Component of the CCC complex, which is involved in the regulation of endosomal recycling of surface proteins, including integrins, signaling receptor and channels. The CCC complex associates with SNX17, retriever and WASH complexes to prevent lysosomal degradation and promote cell surface recycling of numerous cargos such as integrins ITGA5:ITGB1 (By similarity). Plays a role in copper ion homeostasis (By similarity). Involved in copper-dependent ATP7A trafficking between the trans-Golgi network and vesicles in the cell periphery; the function is proposed to depend on its association within the CCC complex and cooperation with the WASH complex on early endosomes (By similarity).</text>
</comment>
<comment type="subunit">
    <text evidence="1 2">Component of the commander complex consisting of the CCC subcomplex and the retriever subcomplex (By similarity). Component of the CCC (COMMD/CCDC22/CCDC93) subcomplex consisting of COMMD1, COMMD2, COMMD3, COMMD4, COMMD5, COMMD6, COMMD7, COMMD8, COMMD9, COMMD10, CCDC22 and CCDC93 (By similarity). Forms a coiled-coil heterodimer with CCDC22; this heterodimer interacts with the guanine nucleotide exchange factor DENND10; the interaction is direct (By similarity). Interacts with CUL1, CUL2, CUL3, SKP1, BTRC (By similarity). Interacts with SNX17 and SNX31 (By similarity). Interacts with CPNE1 and CPNE4 (By similarity).</text>
</comment>
<comment type="subcellular location">
    <subcellularLocation>
        <location evidence="1">Endosome</location>
    </subcellularLocation>
    <subcellularLocation>
        <location evidence="1">Cytoplasm</location>
        <location evidence="1">Cytoskeleton</location>
        <location evidence="1">Microtubule organizing center</location>
        <location evidence="1">Centrosome</location>
    </subcellularLocation>
</comment>
<comment type="similarity">
    <text evidence="5">Belongs to the CCDC22 family.</text>
</comment>
<feature type="chain" id="PRO_0000338399" description="Coiled-coil domain-containing protein 22">
    <location>
        <begin position="1"/>
        <end position="595"/>
    </location>
</feature>
<feature type="region of interest" description="Sufficicient and required for interaction with CCDC93" evidence="1">
    <location>
        <begin position="1"/>
        <end position="447"/>
    </location>
</feature>
<feature type="region of interest" description="Sufficient for interaction with COMMD1" evidence="1">
    <location>
        <begin position="1"/>
        <end position="321"/>
    </location>
</feature>
<feature type="region of interest" description="Disordered" evidence="4">
    <location>
        <begin position="218"/>
        <end position="243"/>
    </location>
</feature>
<feature type="coiled-coil region" evidence="3">
    <location>
        <begin position="323"/>
        <end position="369"/>
    </location>
</feature>
<feature type="coiled-coil region" evidence="3">
    <location>
        <begin position="447"/>
        <end position="484"/>
    </location>
</feature>
<feature type="coiled-coil region" evidence="3">
    <location>
        <begin position="564"/>
        <end position="595"/>
    </location>
</feature>
<feature type="compositionally biased region" description="Basic and acidic residues" evidence="4">
    <location>
        <begin position="218"/>
        <end position="230"/>
    </location>
</feature>
<feature type="modified residue" description="Phosphoserine" evidence="1">
    <location>
        <position position="410"/>
    </location>
</feature>
<protein>
    <recommendedName>
        <fullName>Coiled-coil domain-containing protein 22</fullName>
    </recommendedName>
</protein>
<keyword id="KW-0175">Coiled coil</keyword>
<keyword id="KW-0963">Cytoplasm</keyword>
<keyword id="KW-0206">Cytoskeleton</keyword>
<keyword id="KW-0967">Endosome</keyword>
<keyword id="KW-0597">Phosphoprotein</keyword>
<keyword id="KW-0653">Protein transport</keyword>
<keyword id="KW-1185">Reference proteome</keyword>
<keyword id="KW-0813">Transport</keyword>
<keyword id="KW-0833">Ubl conjugation pathway</keyword>
<organism>
    <name type="scientific">Bos taurus</name>
    <name type="common">Bovine</name>
    <dbReference type="NCBI Taxonomy" id="9913"/>
    <lineage>
        <taxon>Eukaryota</taxon>
        <taxon>Metazoa</taxon>
        <taxon>Chordata</taxon>
        <taxon>Craniata</taxon>
        <taxon>Vertebrata</taxon>
        <taxon>Euteleostomi</taxon>
        <taxon>Mammalia</taxon>
        <taxon>Eutheria</taxon>
        <taxon>Laurasiatheria</taxon>
        <taxon>Artiodactyla</taxon>
        <taxon>Ruminantia</taxon>
        <taxon>Pecora</taxon>
        <taxon>Bovidae</taxon>
        <taxon>Bovinae</taxon>
        <taxon>Bos</taxon>
    </lineage>
</organism>
<sequence>MEEADRILIHSLRQAGTAVPPDVQTLRAFTTELVVEAVVRCLRVINPAVGSGLSPLLPLAMSARFRLAMSLAQACMDLGYPLELGYQNFLYPSEPDLRDLLLFLAERLPTDASEDADQSAGESAILLRAIGSRIRDHLALPWVPPLLRTPKLQYLQGSAHQKPFHASRLVMPELSSRGESREFQAGPLLLPVPAQVPQPAARAASLLEHHAIQLCQHTGRDRAGDEDWGHRTSRLPAQEDTRAQRQRLQKHLAEHLRQTWGRPGPPQQARDLGEVLQAWGAGARPGTPKGSRFTHSKKFTFHLEPEAQAAQVSDVPATSQRPEQDTWAAQEQELESLREQLEGVNHNIEEVEANMKTLGINLVQVETECRQSELSIVEREQALRLKSQAVELLPDGAANLAKLQLVVESSAQRVIHLAGQWEKHRVPLLAEYRHLRKLQDCRELESSRRLAEIQELHQSVRAAAEEARRKEEVYKQLVSELETLPKDVSRLAYTQRILEIVGNIRKQKEEITKDAKKDDAVRKAYKYLAALHENCSQLIQTIEDTGTIMREVRDLEEQIETEMGKKTLSNLDKIREDYRALRQENAGLLGRVREA</sequence>
<gene>
    <name type="primary">CCDC22</name>
</gene>
<proteinExistence type="evidence at transcript level"/>
<reference key="1">
    <citation type="submission" date="2006-04" db="EMBL/GenBank/DDBJ databases">
        <authorList>
            <consortium name="NIH - Mammalian Gene Collection (MGC) project"/>
        </authorList>
    </citation>
    <scope>NUCLEOTIDE SEQUENCE [LARGE SCALE MRNA]</scope>
    <source>
        <strain>Hereford</strain>
        <tissue>Thymus</tissue>
    </source>
</reference>